<protein>
    <recommendedName>
        <fullName>Scrapie-responsive protein 1</fullName>
    </recommendedName>
    <alternativeName>
        <fullName>Scrapie-responsive gene 1 protein</fullName>
        <shortName>ScRG-1</shortName>
    </alternativeName>
</protein>
<proteinExistence type="inferred from homology"/>
<feature type="signal peptide" evidence="1">
    <location>
        <begin position="1"/>
        <end position="20"/>
    </location>
</feature>
<feature type="chain" id="PRO_0000022285" description="Scrapie-responsive protein 1">
    <location>
        <begin position="21"/>
        <end position="98"/>
    </location>
</feature>
<feature type="glycosylation site" description="N-linked (GlcNAc...) asparagine" evidence="1">
    <location>
        <position position="72"/>
    </location>
</feature>
<gene>
    <name type="primary">Scrg1</name>
</gene>
<reference key="1">
    <citation type="submission" date="1999-01" db="EMBL/GenBank/DDBJ databases">
        <authorList>
            <person name="Dron M.H."/>
        </authorList>
    </citation>
    <scope>NUCLEOTIDE SEQUENCE [MRNA]</scope>
</reference>
<sequence length="98" mass="11162">MMKCVVLVILGLTLLLGTQAMPSSRLSCYRKLLKDRNCHNLPEGRADLKLIDENVQHHFWEGKGCEMICYCNFSELLCCPKDVFFGPKISFVIPCNSH</sequence>
<evidence type="ECO:0000255" key="1"/>
<evidence type="ECO:0000305" key="2"/>
<comment type="subcellular location">
    <subcellularLocation>
        <location evidence="2">Secreted</location>
    </subcellularLocation>
</comment>
<comment type="similarity">
    <text evidence="2">Belongs to the SCRG1 family.</text>
</comment>
<organism>
    <name type="scientific">Rattus norvegicus</name>
    <name type="common">Rat</name>
    <dbReference type="NCBI Taxonomy" id="10116"/>
    <lineage>
        <taxon>Eukaryota</taxon>
        <taxon>Metazoa</taxon>
        <taxon>Chordata</taxon>
        <taxon>Craniata</taxon>
        <taxon>Vertebrata</taxon>
        <taxon>Euteleostomi</taxon>
        <taxon>Mammalia</taxon>
        <taxon>Eutheria</taxon>
        <taxon>Euarchontoglires</taxon>
        <taxon>Glires</taxon>
        <taxon>Rodentia</taxon>
        <taxon>Myomorpha</taxon>
        <taxon>Muroidea</taxon>
        <taxon>Muridae</taxon>
        <taxon>Murinae</taxon>
        <taxon>Rattus</taxon>
    </lineage>
</organism>
<dbReference type="EMBL" id="AJ132434">
    <property type="protein sequence ID" value="CAA10668.1"/>
    <property type="molecule type" value="mRNA"/>
</dbReference>
<dbReference type="RefSeq" id="NP_277034.1">
    <property type="nucleotide sequence ID" value="NM_033499.1"/>
</dbReference>
<dbReference type="FunCoup" id="Q9Z0K6">
    <property type="interactions" value="6"/>
</dbReference>
<dbReference type="STRING" id="10116.ENSRNOP00000017888"/>
<dbReference type="GlyCosmos" id="Q9Z0K6">
    <property type="glycosylation" value="1 site, No reported glycans"/>
</dbReference>
<dbReference type="GlyGen" id="Q9Z0K6">
    <property type="glycosylation" value="1 site"/>
</dbReference>
<dbReference type="PhosphoSitePlus" id="Q9Z0K6"/>
<dbReference type="PaxDb" id="10116-ENSRNOP00000017888"/>
<dbReference type="Ensembl" id="ENSRNOT00000110541.1">
    <property type="protein sequence ID" value="ENSRNOP00000084059.1"/>
    <property type="gene ID" value="ENSRNOG00000069516.1"/>
</dbReference>
<dbReference type="GeneID" id="64458"/>
<dbReference type="KEGG" id="rno:64458"/>
<dbReference type="UCSC" id="RGD:68377">
    <property type="organism name" value="rat"/>
</dbReference>
<dbReference type="AGR" id="RGD:68377"/>
<dbReference type="CTD" id="11341"/>
<dbReference type="RGD" id="68377">
    <property type="gene designation" value="Scrg1"/>
</dbReference>
<dbReference type="eggNOG" id="ENOG502S6ID">
    <property type="taxonomic scope" value="Eukaryota"/>
</dbReference>
<dbReference type="GeneTree" id="ENSGT00390000009191"/>
<dbReference type="HOGENOM" id="CLU_163466_0_0_1"/>
<dbReference type="InParanoid" id="Q9Z0K6"/>
<dbReference type="OMA" id="NVPDHFW"/>
<dbReference type="OrthoDB" id="8865355at2759"/>
<dbReference type="PhylomeDB" id="Q9Z0K6"/>
<dbReference type="TreeFam" id="TF335779"/>
<dbReference type="PRO" id="PR:Q9Z0K6"/>
<dbReference type="Proteomes" id="UP000002494">
    <property type="component" value="Chromosome 16"/>
</dbReference>
<dbReference type="Bgee" id="ENSRNOG00000013228">
    <property type="expression patterns" value="Expressed in cerebellum and 2 other cell types or tissues"/>
</dbReference>
<dbReference type="GO" id="GO:0005737">
    <property type="term" value="C:cytoplasm"/>
    <property type="evidence" value="ECO:0000266"/>
    <property type="project" value="RGD"/>
</dbReference>
<dbReference type="GO" id="GO:0005576">
    <property type="term" value="C:extracellular region"/>
    <property type="evidence" value="ECO:0007669"/>
    <property type="project" value="UniProtKB-SubCell"/>
</dbReference>
<dbReference type="GO" id="GO:0005794">
    <property type="term" value="C:Golgi apparatus"/>
    <property type="evidence" value="ECO:0000266"/>
    <property type="project" value="RGD"/>
</dbReference>
<dbReference type="GO" id="GO:0044306">
    <property type="term" value="C:neuron projection terminus"/>
    <property type="evidence" value="ECO:0000266"/>
    <property type="project" value="RGD"/>
</dbReference>
<dbReference type="GO" id="GO:0097168">
    <property type="term" value="P:mesenchymal stem cell proliferation"/>
    <property type="evidence" value="ECO:0000266"/>
    <property type="project" value="RGD"/>
</dbReference>
<dbReference type="InterPro" id="IPR028063">
    <property type="entry name" value="SCRG1"/>
</dbReference>
<dbReference type="PANTHER" id="PTHR17463:SF0">
    <property type="entry name" value="SCRAPIE-RESPONSIVE PROTEIN 1"/>
    <property type="match status" value="1"/>
</dbReference>
<dbReference type="PANTHER" id="PTHR17463">
    <property type="entry name" value="SCRAPIE-RESPONSIVE PROTEIN 1 SCRG1"/>
    <property type="match status" value="1"/>
</dbReference>
<dbReference type="Pfam" id="PF15224">
    <property type="entry name" value="SCRG1"/>
    <property type="match status" value="1"/>
</dbReference>
<accession>Q9Z0K6</accession>
<name>SCRG1_RAT</name>
<keyword id="KW-0325">Glycoprotein</keyword>
<keyword id="KW-1185">Reference proteome</keyword>
<keyword id="KW-0964">Secreted</keyword>
<keyword id="KW-0732">Signal</keyword>